<comment type="function">
    <text evidence="1">Endoribonuclease that initiates mRNA decay.</text>
</comment>
<comment type="subcellular location">
    <subcellularLocation>
        <location evidence="1">Cell membrane</location>
        <topology evidence="1">Single-pass membrane protein</topology>
    </subcellularLocation>
</comment>
<comment type="similarity">
    <text evidence="1">Belongs to the RNase Y family.</text>
</comment>
<evidence type="ECO:0000255" key="1">
    <source>
        <dbReference type="HAMAP-Rule" id="MF_00335"/>
    </source>
</evidence>
<evidence type="ECO:0000255" key="2">
    <source>
        <dbReference type="PROSITE-ProRule" id="PRU01175"/>
    </source>
</evidence>
<evidence type="ECO:0000256" key="3">
    <source>
        <dbReference type="SAM" id="MobiDB-lite"/>
    </source>
</evidence>
<name>RNY_ENTFA</name>
<accession>Q82Z99</accession>
<gene>
    <name evidence="1" type="primary">rny</name>
    <name type="ordered locus">EF_3170</name>
</gene>
<organism>
    <name type="scientific">Enterococcus faecalis (strain ATCC 700802 / V583)</name>
    <dbReference type="NCBI Taxonomy" id="226185"/>
    <lineage>
        <taxon>Bacteria</taxon>
        <taxon>Bacillati</taxon>
        <taxon>Bacillota</taxon>
        <taxon>Bacilli</taxon>
        <taxon>Lactobacillales</taxon>
        <taxon>Enterococcaceae</taxon>
        <taxon>Enterococcus</taxon>
    </lineage>
</organism>
<keyword id="KW-1003">Cell membrane</keyword>
<keyword id="KW-0255">Endonuclease</keyword>
<keyword id="KW-0378">Hydrolase</keyword>
<keyword id="KW-0472">Membrane</keyword>
<keyword id="KW-0540">Nuclease</keyword>
<keyword id="KW-1185">Reference proteome</keyword>
<keyword id="KW-0694">RNA-binding</keyword>
<keyword id="KW-0812">Transmembrane</keyword>
<keyword id="KW-1133">Transmembrane helix</keyword>
<dbReference type="EC" id="3.1.-.-" evidence="1"/>
<dbReference type="EMBL" id="AE016830">
    <property type="protein sequence ID" value="AAO82844.1"/>
    <property type="molecule type" value="Genomic_DNA"/>
</dbReference>
<dbReference type="RefSeq" id="NP_816774.1">
    <property type="nucleotide sequence ID" value="NC_004668.1"/>
</dbReference>
<dbReference type="RefSeq" id="WP_002354863.1">
    <property type="nucleotide sequence ID" value="NZ_KE136524.1"/>
</dbReference>
<dbReference type="SMR" id="Q82Z99"/>
<dbReference type="STRING" id="226185.EF_3170"/>
<dbReference type="EnsemblBacteria" id="AAO82844">
    <property type="protein sequence ID" value="AAO82844"/>
    <property type="gene ID" value="EF_3170"/>
</dbReference>
<dbReference type="GeneID" id="60892410"/>
<dbReference type="KEGG" id="efa:EF3170"/>
<dbReference type="PATRIC" id="fig|226185.45.peg.408"/>
<dbReference type="eggNOG" id="COG1418">
    <property type="taxonomic scope" value="Bacteria"/>
</dbReference>
<dbReference type="HOGENOM" id="CLU_028328_1_0_9"/>
<dbReference type="PHI-base" id="PHI:11493"/>
<dbReference type="Proteomes" id="UP000001415">
    <property type="component" value="Chromosome"/>
</dbReference>
<dbReference type="GO" id="GO:0005886">
    <property type="term" value="C:plasma membrane"/>
    <property type="evidence" value="ECO:0007669"/>
    <property type="project" value="UniProtKB-SubCell"/>
</dbReference>
<dbReference type="GO" id="GO:0003723">
    <property type="term" value="F:RNA binding"/>
    <property type="evidence" value="ECO:0007669"/>
    <property type="project" value="UniProtKB-UniRule"/>
</dbReference>
<dbReference type="GO" id="GO:0004521">
    <property type="term" value="F:RNA endonuclease activity"/>
    <property type="evidence" value="ECO:0007669"/>
    <property type="project" value="UniProtKB-UniRule"/>
</dbReference>
<dbReference type="GO" id="GO:0006402">
    <property type="term" value="P:mRNA catabolic process"/>
    <property type="evidence" value="ECO:0007669"/>
    <property type="project" value="UniProtKB-UniRule"/>
</dbReference>
<dbReference type="CDD" id="cd00077">
    <property type="entry name" value="HDc"/>
    <property type="match status" value="1"/>
</dbReference>
<dbReference type="CDD" id="cd22431">
    <property type="entry name" value="KH-I_RNaseY"/>
    <property type="match status" value="1"/>
</dbReference>
<dbReference type="FunFam" id="1.10.3210.10:FF:000003">
    <property type="entry name" value="Ribonuclease Y"/>
    <property type="match status" value="1"/>
</dbReference>
<dbReference type="FunFam" id="3.30.1370.10:FF:000006">
    <property type="entry name" value="Ribonuclease Y"/>
    <property type="match status" value="1"/>
</dbReference>
<dbReference type="Gene3D" id="1.10.3210.10">
    <property type="entry name" value="Hypothetical protein af1432"/>
    <property type="match status" value="1"/>
</dbReference>
<dbReference type="Gene3D" id="3.30.1370.10">
    <property type="entry name" value="K Homology domain, type 1"/>
    <property type="match status" value="1"/>
</dbReference>
<dbReference type="HAMAP" id="MF_00335">
    <property type="entry name" value="RNase_Y"/>
    <property type="match status" value="1"/>
</dbReference>
<dbReference type="InterPro" id="IPR003607">
    <property type="entry name" value="HD/PDEase_dom"/>
</dbReference>
<dbReference type="InterPro" id="IPR006674">
    <property type="entry name" value="HD_domain"/>
</dbReference>
<dbReference type="InterPro" id="IPR006675">
    <property type="entry name" value="HDIG_dom"/>
</dbReference>
<dbReference type="InterPro" id="IPR004087">
    <property type="entry name" value="KH_dom"/>
</dbReference>
<dbReference type="InterPro" id="IPR004088">
    <property type="entry name" value="KH_dom_type_1"/>
</dbReference>
<dbReference type="InterPro" id="IPR036612">
    <property type="entry name" value="KH_dom_type_1_sf"/>
</dbReference>
<dbReference type="InterPro" id="IPR017705">
    <property type="entry name" value="Ribonuclease_Y"/>
</dbReference>
<dbReference type="InterPro" id="IPR022711">
    <property type="entry name" value="RNase_Y_N"/>
</dbReference>
<dbReference type="NCBIfam" id="TIGR00277">
    <property type="entry name" value="HDIG"/>
    <property type="match status" value="1"/>
</dbReference>
<dbReference type="NCBIfam" id="TIGR03319">
    <property type="entry name" value="RNase_Y"/>
    <property type="match status" value="1"/>
</dbReference>
<dbReference type="PANTHER" id="PTHR12826">
    <property type="entry name" value="RIBONUCLEASE Y"/>
    <property type="match status" value="1"/>
</dbReference>
<dbReference type="PANTHER" id="PTHR12826:SF15">
    <property type="entry name" value="RIBONUCLEASE Y"/>
    <property type="match status" value="1"/>
</dbReference>
<dbReference type="Pfam" id="PF01966">
    <property type="entry name" value="HD"/>
    <property type="match status" value="1"/>
</dbReference>
<dbReference type="Pfam" id="PF00013">
    <property type="entry name" value="KH_1"/>
    <property type="match status" value="1"/>
</dbReference>
<dbReference type="Pfam" id="PF12072">
    <property type="entry name" value="RNase_Y_N"/>
    <property type="match status" value="1"/>
</dbReference>
<dbReference type="SMART" id="SM00471">
    <property type="entry name" value="HDc"/>
    <property type="match status" value="1"/>
</dbReference>
<dbReference type="SMART" id="SM00322">
    <property type="entry name" value="KH"/>
    <property type="match status" value="1"/>
</dbReference>
<dbReference type="SUPFAM" id="SSF54791">
    <property type="entry name" value="Eukaryotic type KH-domain (KH-domain type I)"/>
    <property type="match status" value="1"/>
</dbReference>
<dbReference type="SUPFAM" id="SSF109604">
    <property type="entry name" value="HD-domain/PDEase-like"/>
    <property type="match status" value="1"/>
</dbReference>
<dbReference type="PROSITE" id="PS51831">
    <property type="entry name" value="HD"/>
    <property type="match status" value="1"/>
</dbReference>
<dbReference type="PROSITE" id="PS50084">
    <property type="entry name" value="KH_TYPE_1"/>
    <property type="match status" value="1"/>
</dbReference>
<feature type="chain" id="PRO_0000344870" description="Ribonuclease Y">
    <location>
        <begin position="1"/>
        <end position="518"/>
    </location>
</feature>
<feature type="transmembrane region" description="Helical" evidence="1">
    <location>
        <begin position="2"/>
        <end position="22"/>
    </location>
</feature>
<feature type="domain" description="KH" evidence="1">
    <location>
        <begin position="208"/>
        <end position="268"/>
    </location>
</feature>
<feature type="domain" description="HD" evidence="2">
    <location>
        <begin position="334"/>
        <end position="427"/>
    </location>
</feature>
<feature type="region of interest" description="Disordered" evidence="3">
    <location>
        <begin position="91"/>
        <end position="119"/>
    </location>
</feature>
<sequence length="518" mass="58049">MVLNILLAIVGLIVGLGLGFVIAKSRHDKAINGAKISASSILENARKESETLKKEALLEAKEENQKYRSEIESELKESRLELKSQENRLIQREQTLDRKDDSLEKREGSLEEKEEKLGARQQLIDEREKEVENLINQQHQELERIASLSKEEAKSIIMKSTEEELNHELTLMVKESEQRAKEESDRKAKNLLSLAIQRCAADSVSETTVSVVTLPNDEMKGRIIGREGRNIRTLETLTGIDLIIDDTPEAVVLSGFDPIRREIARMTLEKLIQDGRIHPARIEEMVEKSRKEMDERIREYGEQAAFEVGAHTLHPDLIKILGRLRFRTSYGQNVLNHSIEVAKLAGVLAAELGEDVQLAKRAGLLHDIGKALDHEIEGSHVEIGAELAAKYKENSVVINAIASHHGDVEATSVISVLVAAADALSAARPGARSESLENYIRRLENLENISNSFEGVDSSFAVQAGREVRVMVKPEEISDLESVRLVRDIRKKIEDDLDYPGHIKVTVIRETRAVDYAK</sequence>
<reference key="1">
    <citation type="journal article" date="2003" name="Science">
        <title>Role of mobile DNA in the evolution of vancomycin-resistant Enterococcus faecalis.</title>
        <authorList>
            <person name="Paulsen I.T."/>
            <person name="Banerjei L."/>
            <person name="Myers G.S.A."/>
            <person name="Nelson K.E."/>
            <person name="Seshadri R."/>
            <person name="Read T.D."/>
            <person name="Fouts D.E."/>
            <person name="Eisen J.A."/>
            <person name="Gill S.R."/>
            <person name="Heidelberg J.F."/>
            <person name="Tettelin H."/>
            <person name="Dodson R.J."/>
            <person name="Umayam L.A."/>
            <person name="Brinkac L.M."/>
            <person name="Beanan M.J."/>
            <person name="Daugherty S.C."/>
            <person name="DeBoy R.T."/>
            <person name="Durkin S.A."/>
            <person name="Kolonay J.F."/>
            <person name="Madupu R."/>
            <person name="Nelson W.C."/>
            <person name="Vamathevan J.J."/>
            <person name="Tran B."/>
            <person name="Upton J."/>
            <person name="Hansen T."/>
            <person name="Shetty J."/>
            <person name="Khouri H.M."/>
            <person name="Utterback T.R."/>
            <person name="Radune D."/>
            <person name="Ketchum K.A."/>
            <person name="Dougherty B.A."/>
            <person name="Fraser C.M."/>
        </authorList>
    </citation>
    <scope>NUCLEOTIDE SEQUENCE [LARGE SCALE GENOMIC DNA]</scope>
    <source>
        <strain>ATCC 700802 / V583</strain>
    </source>
</reference>
<proteinExistence type="inferred from homology"/>
<protein>
    <recommendedName>
        <fullName evidence="1">Ribonuclease Y</fullName>
        <shortName evidence="1">RNase Y</shortName>
        <ecNumber evidence="1">3.1.-.-</ecNumber>
    </recommendedName>
</protein>